<accession>B0CLB4</accession>
<feature type="chain" id="PRO_0000349026" description="Heme A synthase">
    <location>
        <begin position="1"/>
        <end position="358"/>
    </location>
</feature>
<feature type="transmembrane region" description="Helical" evidence="1">
    <location>
        <begin position="25"/>
        <end position="45"/>
    </location>
</feature>
<feature type="transmembrane region" description="Helical" evidence="1">
    <location>
        <begin position="111"/>
        <end position="131"/>
    </location>
</feature>
<feature type="transmembrane region" description="Helical" evidence="1">
    <location>
        <begin position="141"/>
        <end position="161"/>
    </location>
</feature>
<feature type="transmembrane region" description="Helical" evidence="1">
    <location>
        <begin position="176"/>
        <end position="196"/>
    </location>
</feature>
<feature type="transmembrane region" description="Helical" evidence="1">
    <location>
        <begin position="210"/>
        <end position="230"/>
    </location>
</feature>
<feature type="transmembrane region" description="Helical" evidence="1">
    <location>
        <begin position="269"/>
        <end position="289"/>
    </location>
</feature>
<feature type="transmembrane region" description="Helical" evidence="1">
    <location>
        <begin position="304"/>
        <end position="324"/>
    </location>
</feature>
<feature type="transmembrane region" description="Helical" evidence="1">
    <location>
        <begin position="326"/>
        <end position="346"/>
    </location>
</feature>
<feature type="binding site" description="axial binding residue" evidence="1">
    <location>
        <position position="273"/>
    </location>
    <ligand>
        <name>heme</name>
        <dbReference type="ChEBI" id="CHEBI:30413"/>
    </ligand>
    <ligandPart>
        <name>Fe</name>
        <dbReference type="ChEBI" id="CHEBI:18248"/>
    </ligandPart>
</feature>
<feature type="binding site" description="axial binding residue" evidence="1">
    <location>
        <position position="334"/>
    </location>
    <ligand>
        <name>heme</name>
        <dbReference type="ChEBI" id="CHEBI:30413"/>
    </ligand>
    <ligandPart>
        <name>Fe</name>
        <dbReference type="ChEBI" id="CHEBI:18248"/>
    </ligandPart>
</feature>
<proteinExistence type="inferred from homology"/>
<keyword id="KW-1003">Cell membrane</keyword>
<keyword id="KW-0350">Heme biosynthesis</keyword>
<keyword id="KW-0408">Iron</keyword>
<keyword id="KW-0472">Membrane</keyword>
<keyword id="KW-0479">Metal-binding</keyword>
<keyword id="KW-0560">Oxidoreductase</keyword>
<keyword id="KW-0812">Transmembrane</keyword>
<keyword id="KW-1133">Transmembrane helix</keyword>
<sequence>MAATSAQHIGLQGHGTSRNDRDRRLVRYWLYAVFAVLIAIVMVGGATRMTGSGLSITEWKPIHGVIPPLNHAEWVEEFEKYQQIPQYQQINKGMSLAEFQYIFWWEWAHRLLARFVGFLVAVPLGFFWLTGRLKGGLKYRMLGLLALGGLQGAIGWWMVASGLSELTSVSQYRLAIHLTTACVIITAVFYIARGLVTYSERPAERSIQRFAGWIVFAVLVQIYLGGLVAGLHAGLTYNTWPLIDGAIIPSDLFTQAPWWRNLFENPKTVQFVHRMFAYTVLLLAILHAVQVWKNAPGTTHARRTIVLVGLVFIQAMIGIATLLMSAPLHLGLTHQFFALVVLAFAVAHWRATKGAYAA</sequence>
<gene>
    <name evidence="1" type="primary">ctaA</name>
    <name type="ordered locus">BSUIS_A0824</name>
</gene>
<protein>
    <recommendedName>
        <fullName evidence="1">Heme A synthase</fullName>
        <shortName evidence="1">HAS</shortName>
        <ecNumber evidence="1">1.17.99.9</ecNumber>
    </recommendedName>
    <alternativeName>
        <fullName evidence="1">Cytochrome aa3-controlling protein</fullName>
    </alternativeName>
</protein>
<name>CTAA_BRUSI</name>
<evidence type="ECO:0000255" key="1">
    <source>
        <dbReference type="HAMAP-Rule" id="MF_01665"/>
    </source>
</evidence>
<comment type="function">
    <text evidence="1">Catalyzes the conversion of heme O to heme A by two successive hydroxylations of the methyl group at C8. The first hydroxylation forms heme I, the second hydroxylation results in an unstable dihydroxymethyl group, which spontaneously dehydrates, resulting in the formyl group of heme A.</text>
</comment>
<comment type="catalytic activity">
    <reaction evidence="1">
        <text>Fe(II)-heme o + 2 A + H2O = Fe(II)-heme a + 2 AH2</text>
        <dbReference type="Rhea" id="RHEA:63388"/>
        <dbReference type="ChEBI" id="CHEBI:13193"/>
        <dbReference type="ChEBI" id="CHEBI:15377"/>
        <dbReference type="ChEBI" id="CHEBI:17499"/>
        <dbReference type="ChEBI" id="CHEBI:60530"/>
        <dbReference type="ChEBI" id="CHEBI:61715"/>
        <dbReference type="EC" id="1.17.99.9"/>
    </reaction>
    <physiologicalReaction direction="left-to-right" evidence="1">
        <dbReference type="Rhea" id="RHEA:63389"/>
    </physiologicalReaction>
</comment>
<comment type="cofactor">
    <cofactor evidence="1">
        <name>heme b</name>
        <dbReference type="ChEBI" id="CHEBI:60344"/>
    </cofactor>
</comment>
<comment type="pathway">
    <text evidence="1">Porphyrin-containing compound metabolism; heme A biosynthesis; heme A from heme O: step 1/1.</text>
</comment>
<comment type="subunit">
    <text evidence="1">Interacts with CtaB.</text>
</comment>
<comment type="subcellular location">
    <subcellularLocation>
        <location evidence="1">Cell membrane</location>
        <topology evidence="1">Multi-pass membrane protein</topology>
    </subcellularLocation>
</comment>
<comment type="similarity">
    <text evidence="1">Belongs to the COX15/CtaA family. Type 2 subfamily.</text>
</comment>
<organism>
    <name type="scientific">Brucella suis (strain ATCC 23445 / NCTC 10510)</name>
    <dbReference type="NCBI Taxonomy" id="470137"/>
    <lineage>
        <taxon>Bacteria</taxon>
        <taxon>Pseudomonadati</taxon>
        <taxon>Pseudomonadota</taxon>
        <taxon>Alphaproteobacteria</taxon>
        <taxon>Hyphomicrobiales</taxon>
        <taxon>Brucellaceae</taxon>
        <taxon>Brucella/Ochrobactrum group</taxon>
        <taxon>Brucella</taxon>
    </lineage>
</organism>
<reference key="1">
    <citation type="submission" date="2007-12" db="EMBL/GenBank/DDBJ databases">
        <title>Brucella suis ATCC 23445 whole genome shotgun sequencing project.</title>
        <authorList>
            <person name="Setubal J.C."/>
            <person name="Bowns C."/>
            <person name="Boyle S."/>
            <person name="Crasta O.R."/>
            <person name="Czar M.J."/>
            <person name="Dharmanolla C."/>
            <person name="Gillespie J.J."/>
            <person name="Kenyon R.W."/>
            <person name="Lu J."/>
            <person name="Mane S."/>
            <person name="Mohapatra S."/>
            <person name="Nagrani S."/>
            <person name="Purkayastha A."/>
            <person name="Rajasimha H.K."/>
            <person name="Shallom J.M."/>
            <person name="Shallom S."/>
            <person name="Shukla M."/>
            <person name="Snyder E.E."/>
            <person name="Sobral B.W."/>
            <person name="Wattam A.R."/>
            <person name="Will R."/>
            <person name="Williams K."/>
            <person name="Yoo H."/>
            <person name="Bruce D."/>
            <person name="Detter C."/>
            <person name="Munk C."/>
            <person name="Brettin T.S."/>
        </authorList>
    </citation>
    <scope>NUCLEOTIDE SEQUENCE [LARGE SCALE GENOMIC DNA]</scope>
    <source>
        <strain>ATCC 23445 / NCTC 10510</strain>
    </source>
</reference>
<dbReference type="EC" id="1.17.99.9" evidence="1"/>
<dbReference type="EMBL" id="CP000911">
    <property type="protein sequence ID" value="ABY37894.1"/>
    <property type="molecule type" value="Genomic_DNA"/>
</dbReference>
<dbReference type="RefSeq" id="WP_006072540.1">
    <property type="nucleotide sequence ID" value="NC_010169.1"/>
</dbReference>
<dbReference type="SMR" id="B0CLB4"/>
<dbReference type="KEGG" id="bmt:BSUIS_A0824"/>
<dbReference type="HOGENOM" id="CLU_017627_0_0_5"/>
<dbReference type="UniPathway" id="UPA00269">
    <property type="reaction ID" value="UER00713"/>
</dbReference>
<dbReference type="Proteomes" id="UP000008545">
    <property type="component" value="Chromosome I"/>
</dbReference>
<dbReference type="GO" id="GO:0005886">
    <property type="term" value="C:plasma membrane"/>
    <property type="evidence" value="ECO:0007669"/>
    <property type="project" value="UniProtKB-SubCell"/>
</dbReference>
<dbReference type="GO" id="GO:0046872">
    <property type="term" value="F:metal ion binding"/>
    <property type="evidence" value="ECO:0007669"/>
    <property type="project" value="UniProtKB-KW"/>
</dbReference>
<dbReference type="GO" id="GO:0016653">
    <property type="term" value="F:oxidoreductase activity, acting on NAD(P)H, heme protein as acceptor"/>
    <property type="evidence" value="ECO:0007669"/>
    <property type="project" value="InterPro"/>
</dbReference>
<dbReference type="GO" id="GO:0006784">
    <property type="term" value="P:heme A biosynthetic process"/>
    <property type="evidence" value="ECO:0007669"/>
    <property type="project" value="UniProtKB-UniRule"/>
</dbReference>
<dbReference type="HAMAP" id="MF_01665">
    <property type="entry name" value="HemeA_synth_type2"/>
    <property type="match status" value="1"/>
</dbReference>
<dbReference type="InterPro" id="IPR003780">
    <property type="entry name" value="COX15/CtaA_fam"/>
</dbReference>
<dbReference type="InterPro" id="IPR023754">
    <property type="entry name" value="HemeA_Synthase_type2"/>
</dbReference>
<dbReference type="PANTHER" id="PTHR23289">
    <property type="entry name" value="CYTOCHROME C OXIDASE ASSEMBLY PROTEIN COX15"/>
    <property type="match status" value="1"/>
</dbReference>
<dbReference type="PANTHER" id="PTHR23289:SF2">
    <property type="entry name" value="CYTOCHROME C OXIDASE ASSEMBLY PROTEIN COX15 HOMOLOG"/>
    <property type="match status" value="1"/>
</dbReference>
<dbReference type="Pfam" id="PF02628">
    <property type="entry name" value="COX15-CtaA"/>
    <property type="match status" value="1"/>
</dbReference>